<evidence type="ECO:0000255" key="1">
    <source>
        <dbReference type="HAMAP-Rule" id="MF_01848"/>
    </source>
</evidence>
<accession>B4TQW9</accession>
<keyword id="KW-0963">Cytoplasm</keyword>
<keyword id="KW-0489">Methyltransferase</keyword>
<keyword id="KW-0698">rRNA processing</keyword>
<keyword id="KW-0949">S-adenosyl-L-methionine</keyword>
<keyword id="KW-0808">Transferase</keyword>
<proteinExistence type="inferred from homology"/>
<organism>
    <name type="scientific">Salmonella schwarzengrund (strain CVM19633)</name>
    <dbReference type="NCBI Taxonomy" id="439843"/>
    <lineage>
        <taxon>Bacteria</taxon>
        <taxon>Pseudomonadati</taxon>
        <taxon>Pseudomonadota</taxon>
        <taxon>Gammaproteobacteria</taxon>
        <taxon>Enterobacterales</taxon>
        <taxon>Enterobacteriaceae</taxon>
        <taxon>Salmonella</taxon>
    </lineage>
</organism>
<dbReference type="EC" id="2.1.1.181" evidence="1"/>
<dbReference type="EMBL" id="CP001127">
    <property type="protein sequence ID" value="ACF91322.1"/>
    <property type="molecule type" value="Genomic_DNA"/>
</dbReference>
<dbReference type="RefSeq" id="WP_001275974.1">
    <property type="nucleotide sequence ID" value="NC_011094.1"/>
</dbReference>
<dbReference type="SMR" id="B4TQW9"/>
<dbReference type="KEGG" id="sew:SeSA_A0974"/>
<dbReference type="HOGENOM" id="CLU_027534_3_0_6"/>
<dbReference type="Proteomes" id="UP000001865">
    <property type="component" value="Chromosome"/>
</dbReference>
<dbReference type="GO" id="GO:0005737">
    <property type="term" value="C:cytoplasm"/>
    <property type="evidence" value="ECO:0007669"/>
    <property type="project" value="UniProtKB-SubCell"/>
</dbReference>
<dbReference type="GO" id="GO:0052907">
    <property type="term" value="F:23S rRNA (adenine(1618)-N(6))-methyltransferase activity"/>
    <property type="evidence" value="ECO:0007669"/>
    <property type="project" value="UniProtKB-EC"/>
</dbReference>
<dbReference type="GO" id="GO:0070475">
    <property type="term" value="P:rRNA base methylation"/>
    <property type="evidence" value="ECO:0007669"/>
    <property type="project" value="TreeGrafter"/>
</dbReference>
<dbReference type="FunFam" id="3.40.50.150:FF:000045">
    <property type="entry name" value="Ribosomal RNA large subunit methyltransferase F"/>
    <property type="match status" value="1"/>
</dbReference>
<dbReference type="Gene3D" id="3.40.50.150">
    <property type="entry name" value="Vaccinia Virus protein VP39"/>
    <property type="match status" value="1"/>
</dbReference>
<dbReference type="HAMAP" id="MF_01848">
    <property type="entry name" value="23SrRNA_methyltr_F"/>
    <property type="match status" value="1"/>
</dbReference>
<dbReference type="InterPro" id="IPR010286">
    <property type="entry name" value="METTL16/RlmF"/>
</dbReference>
<dbReference type="InterPro" id="IPR016909">
    <property type="entry name" value="rRNA_lsu_MeTfrase_F"/>
</dbReference>
<dbReference type="InterPro" id="IPR029063">
    <property type="entry name" value="SAM-dependent_MTases_sf"/>
</dbReference>
<dbReference type="NCBIfam" id="NF008725">
    <property type="entry name" value="PRK11727.1"/>
    <property type="match status" value="1"/>
</dbReference>
<dbReference type="PANTHER" id="PTHR13393:SF0">
    <property type="entry name" value="RNA N6-ADENOSINE-METHYLTRANSFERASE METTL16"/>
    <property type="match status" value="1"/>
</dbReference>
<dbReference type="PANTHER" id="PTHR13393">
    <property type="entry name" value="SAM-DEPENDENT METHYLTRANSFERASE"/>
    <property type="match status" value="1"/>
</dbReference>
<dbReference type="Pfam" id="PF05971">
    <property type="entry name" value="Methyltransf_10"/>
    <property type="match status" value="1"/>
</dbReference>
<dbReference type="PIRSF" id="PIRSF029038">
    <property type="entry name" value="Mtase_YbiN_prd"/>
    <property type="match status" value="1"/>
</dbReference>
<dbReference type="SUPFAM" id="SSF53335">
    <property type="entry name" value="S-adenosyl-L-methionine-dependent methyltransferases"/>
    <property type="match status" value="1"/>
</dbReference>
<reference key="1">
    <citation type="journal article" date="2011" name="J. Bacteriol.">
        <title>Comparative genomics of 28 Salmonella enterica isolates: evidence for CRISPR-mediated adaptive sublineage evolution.</title>
        <authorList>
            <person name="Fricke W.F."/>
            <person name="Mammel M.K."/>
            <person name="McDermott P.F."/>
            <person name="Tartera C."/>
            <person name="White D.G."/>
            <person name="Leclerc J.E."/>
            <person name="Ravel J."/>
            <person name="Cebula T.A."/>
        </authorList>
    </citation>
    <scope>NUCLEOTIDE SEQUENCE [LARGE SCALE GENOMIC DNA]</scope>
    <source>
        <strain>CVM19633</strain>
    </source>
</reference>
<feature type="chain" id="PRO_1000188535" description="Ribosomal RNA large subunit methyltransferase F">
    <location>
        <begin position="1"/>
        <end position="308"/>
    </location>
</feature>
<sequence>MSAQKSGLHPRNRHQHRYDLAALCQTTPELTSFLIRTPAGEQSVDFANPQAVKALNKALLAHFYAVTHWDIPPGFLCPPVPGRADYIHHLADLLGETTGSIPAQATILDVGVGANCIYPLIGVHEYGWRFTGSEVSDAAMSSAQAIIQANTGLSRAIRLRRQKDPAAIFTGIIHKNEFYDATLCNPPFHDSAAAARAGSERKRRNLGQNKDDALNFGGQQQELWCEGGEVAFIKKMIAESQSFRRQVLWFTTLVSRGENLPPLYRALTEAGAVKVVKKEMAQGQKQSRFIAWTFMDDDQRRRFITRKR</sequence>
<protein>
    <recommendedName>
        <fullName evidence="1">Ribosomal RNA large subunit methyltransferase F</fullName>
        <ecNumber evidence="1">2.1.1.181</ecNumber>
    </recommendedName>
    <alternativeName>
        <fullName evidence="1">23S rRNA mA1618 methyltransferase</fullName>
    </alternativeName>
    <alternativeName>
        <fullName evidence="1">rRNA adenine N-6-methyltransferase</fullName>
    </alternativeName>
</protein>
<gene>
    <name evidence="1" type="primary">rlmF</name>
    <name type="ordered locus">SeSA_A0974</name>
</gene>
<comment type="function">
    <text evidence="1">Specifically methylates the adenine in position 1618 of 23S rRNA.</text>
</comment>
<comment type="catalytic activity">
    <reaction evidence="1">
        <text>adenosine(1618) in 23S rRNA + S-adenosyl-L-methionine = N(6)-methyladenosine(1618) in 23S rRNA + S-adenosyl-L-homocysteine + H(+)</text>
        <dbReference type="Rhea" id="RHEA:16497"/>
        <dbReference type="Rhea" id="RHEA-COMP:10229"/>
        <dbReference type="Rhea" id="RHEA-COMP:10231"/>
        <dbReference type="ChEBI" id="CHEBI:15378"/>
        <dbReference type="ChEBI" id="CHEBI:57856"/>
        <dbReference type="ChEBI" id="CHEBI:59789"/>
        <dbReference type="ChEBI" id="CHEBI:74411"/>
        <dbReference type="ChEBI" id="CHEBI:74449"/>
        <dbReference type="EC" id="2.1.1.181"/>
    </reaction>
</comment>
<comment type="subcellular location">
    <subcellularLocation>
        <location evidence="1">Cytoplasm</location>
    </subcellularLocation>
</comment>
<comment type="similarity">
    <text evidence="1">Belongs to the methyltransferase superfamily. METTL16/RlmF family.</text>
</comment>
<name>RLMF_SALSV</name>